<keyword id="KW-0002">3D-structure</keyword>
<keyword id="KW-0050">Antiport</keyword>
<keyword id="KW-1003">Cell membrane</keyword>
<keyword id="KW-0406">Ion transport</keyword>
<keyword id="KW-0472">Membrane</keyword>
<keyword id="KW-1185">Reference proteome</keyword>
<keyword id="KW-0915">Sodium</keyword>
<keyword id="KW-0739">Sodium transport</keyword>
<keyword id="KW-0812">Transmembrane</keyword>
<keyword id="KW-1133">Transmembrane helix</keyword>
<keyword id="KW-0813">Transport</keyword>
<gene>
    <name type="ordered locus">MJ0057</name>
</gene>
<proteinExistence type="evidence at protein level"/>
<organism>
    <name type="scientific">Methanocaldococcus jannaschii (strain ATCC 43067 / DSM 2661 / JAL-1 / JCM 10045 / NBRC 100440)</name>
    <name type="common">Methanococcus jannaschii</name>
    <dbReference type="NCBI Taxonomy" id="243232"/>
    <lineage>
        <taxon>Archaea</taxon>
        <taxon>Methanobacteriati</taxon>
        <taxon>Methanobacteriota</taxon>
        <taxon>Methanomada group</taxon>
        <taxon>Methanococci</taxon>
        <taxon>Methanococcales</taxon>
        <taxon>Methanocaldococcaceae</taxon>
        <taxon>Methanocaldococcus</taxon>
    </lineage>
</organism>
<sequence>MELMMAIGYLGLALVLGSLVAKIAEKLKIPDIPLLLLLGLIIGPFLQIIPSDSAMEIFEYAGPIGLIFILLGGAFTMRISLLKRVIKTVVRLDTITFLITLLISGFIFNMVLNLPYTSPVGYLFGAITAATDPATLIPVFSRVRTNPEVAITLEAESIFNDPLGIVSTSVILGLFGLFSSSNPLIDLITLAGGAIVVGLLLAKIYEKIIIHCDFHEYVAPLVLGGAMLLLYVGDDLLPSICGYGFSGYMAVAIMGLYLGDALFRADDIDYKYIVSFCDDLSLLARVFIFVFLGACIKLSMLENYFIPGLLVALGSIFLARPLGVFLGLIGSKHSFKEKLYFALEGPRGVVPAALAVTVGIEILKNADKIPASITKYITPTDIAGTIIIGTFMTILLSVILEASWAGMLALKLLGEYKPKYKEESHH</sequence>
<comment type="function">
    <text evidence="2">This is a Na(+)/H(+) antiporter. Can also transport lithium.</text>
</comment>
<comment type="biophysicochemical properties">
    <phDependence>
        <text>Active at pH 7.0 and below.</text>
    </phDependence>
</comment>
<comment type="interaction">
    <interactant intactId="EBI-8539024">
        <id>Q60362</id>
    </interactant>
    <interactant intactId="EBI-8539024">
        <id>Q60362</id>
        <label>MJ0057</label>
    </interactant>
    <organismsDiffer>false</organismsDiffer>
    <experiments>2</experiments>
</comment>
<comment type="subcellular location">
    <subcellularLocation>
        <location evidence="4">Cell membrane</location>
        <topology evidence="4">Multi-pass membrane protein</topology>
    </subcellularLocation>
</comment>
<comment type="similarity">
    <text evidence="4">Belongs to the monovalent cation:proton antiporter 1 (CPA1) transporter (TC 2.A.36) family.</text>
</comment>
<dbReference type="EMBL" id="L77117">
    <property type="protein sequence ID" value="AAB98037.1"/>
    <property type="molecule type" value="Genomic_DNA"/>
</dbReference>
<dbReference type="PIR" id="A64307">
    <property type="entry name" value="A64307"/>
</dbReference>
<dbReference type="RefSeq" id="WP_010869549.1">
    <property type="nucleotide sequence ID" value="NC_000909.1"/>
</dbReference>
<dbReference type="PDB" id="4CZB">
    <property type="method" value="X-ray"/>
    <property type="resolution" value="3.50 A"/>
    <property type="chains" value="A/B/C/D=1-426"/>
</dbReference>
<dbReference type="PDB" id="4D0A">
    <property type="method" value="EM"/>
    <property type="resolution" value="6.00 A"/>
    <property type="chains" value="B=1-426"/>
</dbReference>
<dbReference type="PDBsum" id="4CZB"/>
<dbReference type="PDBsum" id="4D0A"/>
<dbReference type="EMDB" id="EMD-2636"/>
<dbReference type="SMR" id="Q60362"/>
<dbReference type="FunCoup" id="Q60362">
    <property type="interactions" value="18"/>
</dbReference>
<dbReference type="MINT" id="Q60362"/>
<dbReference type="STRING" id="243232.MJ_0057"/>
<dbReference type="TCDB" id="2.A.36.6.6">
    <property type="family name" value="the monovalent cation:proton antiporter-1 (cpa1) family"/>
</dbReference>
<dbReference type="PaxDb" id="243232-MJ_0057"/>
<dbReference type="EnsemblBacteria" id="AAB98037">
    <property type="protein sequence ID" value="AAB98037"/>
    <property type="gene ID" value="MJ_0057"/>
</dbReference>
<dbReference type="GeneID" id="1450896"/>
<dbReference type="KEGG" id="mja:MJ_0057"/>
<dbReference type="eggNOG" id="arCOG01961">
    <property type="taxonomic scope" value="Archaea"/>
</dbReference>
<dbReference type="HOGENOM" id="CLU_005912_9_3_2"/>
<dbReference type="InParanoid" id="Q60362"/>
<dbReference type="OrthoDB" id="11709at2157"/>
<dbReference type="PhylomeDB" id="Q60362"/>
<dbReference type="EvolutionaryTrace" id="Q60362"/>
<dbReference type="Proteomes" id="UP000000805">
    <property type="component" value="Chromosome"/>
</dbReference>
<dbReference type="GO" id="GO:0005886">
    <property type="term" value="C:plasma membrane"/>
    <property type="evidence" value="ECO:0007669"/>
    <property type="project" value="UniProtKB-SubCell"/>
</dbReference>
<dbReference type="GO" id="GO:0042802">
    <property type="term" value="F:identical protein binding"/>
    <property type="evidence" value="ECO:0000353"/>
    <property type="project" value="IntAct"/>
</dbReference>
<dbReference type="GO" id="GO:0015386">
    <property type="term" value="F:potassium:proton antiporter activity"/>
    <property type="evidence" value="ECO:0000318"/>
    <property type="project" value="GO_Central"/>
</dbReference>
<dbReference type="GO" id="GO:0030007">
    <property type="term" value="P:intracellular potassium ion homeostasis"/>
    <property type="evidence" value="ECO:0000318"/>
    <property type="project" value="GO_Central"/>
</dbReference>
<dbReference type="GO" id="GO:0006814">
    <property type="term" value="P:sodium ion transport"/>
    <property type="evidence" value="ECO:0007669"/>
    <property type="project" value="UniProtKB-KW"/>
</dbReference>
<dbReference type="Gene3D" id="1.20.1530.20">
    <property type="match status" value="1"/>
</dbReference>
<dbReference type="InterPro" id="IPR006153">
    <property type="entry name" value="Cation/H_exchanger_TM"/>
</dbReference>
<dbReference type="InterPro" id="IPR038770">
    <property type="entry name" value="Na+/solute_symporter_sf"/>
</dbReference>
<dbReference type="PANTHER" id="PTHR32507">
    <property type="entry name" value="NA(+)/H(+) ANTIPORTER 1"/>
    <property type="match status" value="1"/>
</dbReference>
<dbReference type="PANTHER" id="PTHR32507:SF0">
    <property type="entry name" value="NA(+)_H(+) ANTIPORTER 2-RELATED"/>
    <property type="match status" value="1"/>
</dbReference>
<dbReference type="Pfam" id="PF00999">
    <property type="entry name" value="Na_H_Exchanger"/>
    <property type="match status" value="1"/>
</dbReference>
<protein>
    <recommendedName>
        <fullName>Na(+)/H(+) antiporter 1</fullName>
    </recommendedName>
    <alternativeName>
        <fullName>MjNhaP1</fullName>
    </alternativeName>
</protein>
<name>NAH1_METJA</name>
<reference key="1">
    <citation type="journal article" date="1996" name="Science">
        <title>Complete genome sequence of the methanogenic archaeon, Methanococcus jannaschii.</title>
        <authorList>
            <person name="Bult C.J."/>
            <person name="White O."/>
            <person name="Olsen G.J."/>
            <person name="Zhou L."/>
            <person name="Fleischmann R.D."/>
            <person name="Sutton G.G."/>
            <person name="Blake J.A."/>
            <person name="FitzGerald L.M."/>
            <person name="Clayton R.A."/>
            <person name="Gocayne J.D."/>
            <person name="Kerlavage A.R."/>
            <person name="Dougherty B.A."/>
            <person name="Tomb J.-F."/>
            <person name="Adams M.D."/>
            <person name="Reich C.I."/>
            <person name="Overbeek R."/>
            <person name="Kirkness E.F."/>
            <person name="Weinstock K.G."/>
            <person name="Merrick J.M."/>
            <person name="Glodek A."/>
            <person name="Scott J.L."/>
            <person name="Geoghagen N.S.M."/>
            <person name="Weidman J.F."/>
            <person name="Fuhrmann J.L."/>
            <person name="Nguyen D."/>
            <person name="Utterback T.R."/>
            <person name="Kelley J.M."/>
            <person name="Peterson J.D."/>
            <person name="Sadow P.W."/>
            <person name="Hanna M.C."/>
            <person name="Cotton M.D."/>
            <person name="Roberts K.M."/>
            <person name="Hurst M.A."/>
            <person name="Kaine B.P."/>
            <person name="Borodovsky M."/>
            <person name="Klenk H.-P."/>
            <person name="Fraser C.M."/>
            <person name="Smith H.O."/>
            <person name="Woese C.R."/>
            <person name="Venter J.C."/>
        </authorList>
    </citation>
    <scope>NUCLEOTIDE SEQUENCE [LARGE SCALE GENOMIC DNA]</scope>
    <source>
        <strain>ATCC 43067 / DSM 2661 / JAL-1 / JCM 10045 / NBRC 100440</strain>
    </source>
</reference>
<reference key="2">
    <citation type="journal article" date="2002" name="FEBS Lett.">
        <title>Identification of a pH regulated Na(+)/H(+) antiporter of Methanococcus jannaschii.</title>
        <authorList>
            <person name="Hellmer J."/>
            <person name="Paetzold R."/>
            <person name="Zeilinger C."/>
        </authorList>
    </citation>
    <scope>FUNCTION</scope>
</reference>
<reference key="3">
    <citation type="journal article" date="2003" name="FEBS Lett.">
        <title>Conserved arginine and aspartate residues are critical for function of MjNhaP1, a Na+/H+ antiporter of M. jannaschii.</title>
        <authorList>
            <person name="Hellmer J."/>
            <person name="Teubner A."/>
            <person name="Zeilinger C."/>
        </authorList>
    </citation>
    <scope>MUTAGENESIS OF ASP-93; ASP-132; GLU-156; ASP-161; HIS-211; HIS-215; ARG-320; HIS-333 AND ARG-347</scope>
</reference>
<accession>Q60362</accession>
<evidence type="ECO:0000255" key="1"/>
<evidence type="ECO:0000269" key="2">
    <source>
    </source>
</evidence>
<evidence type="ECO:0000269" key="3">
    <source>
    </source>
</evidence>
<evidence type="ECO:0000305" key="4"/>
<evidence type="ECO:0007829" key="5">
    <source>
        <dbReference type="PDB" id="4CZB"/>
    </source>
</evidence>
<feature type="chain" id="PRO_0000052402" description="Na(+)/H(+) antiporter 1">
    <location>
        <begin position="1"/>
        <end position="426"/>
    </location>
</feature>
<feature type="transmembrane region" description="Helical" evidence="1">
    <location>
        <begin position="1"/>
        <end position="21"/>
    </location>
</feature>
<feature type="transmembrane region" description="Helical" evidence="1">
    <location>
        <begin position="29"/>
        <end position="49"/>
    </location>
</feature>
<feature type="transmembrane region" description="Helical" evidence="1">
    <location>
        <begin position="57"/>
        <end position="77"/>
    </location>
</feature>
<feature type="transmembrane region" description="Helical" evidence="1">
    <location>
        <begin position="95"/>
        <end position="115"/>
    </location>
</feature>
<feature type="transmembrane region" description="Helical" evidence="1">
    <location>
        <begin position="120"/>
        <end position="140"/>
    </location>
</feature>
<feature type="transmembrane region" description="Helical" evidence="1">
    <location>
        <begin position="158"/>
        <end position="178"/>
    </location>
</feature>
<feature type="transmembrane region" description="Helical" evidence="1">
    <location>
        <begin position="184"/>
        <end position="204"/>
    </location>
</feature>
<feature type="transmembrane region" description="Helical" evidence="1">
    <location>
        <begin position="208"/>
        <end position="228"/>
    </location>
</feature>
<feature type="transmembrane region" description="Helical" evidence="1">
    <location>
        <begin position="236"/>
        <end position="256"/>
    </location>
</feature>
<feature type="transmembrane region" description="Helical" evidence="1">
    <location>
        <begin position="286"/>
        <end position="306"/>
    </location>
</feature>
<feature type="transmembrane region" description="Helical" evidence="1">
    <location>
        <begin position="309"/>
        <end position="329"/>
    </location>
</feature>
<feature type="transmembrane region" description="Helical" evidence="1">
    <location>
        <begin position="382"/>
        <end position="402"/>
    </location>
</feature>
<feature type="mutagenesis site" description="Strong decrease in activity." evidence="3">
    <original>D</original>
    <variation>A</variation>
    <location>
        <position position="93"/>
    </location>
</feature>
<feature type="mutagenesis site" description="Loss of activity." evidence="3">
    <original>D</original>
    <variation>A</variation>
    <location>
        <position position="132"/>
    </location>
</feature>
<feature type="mutagenesis site" description="Almost no change in activity." evidence="3">
    <original>E</original>
    <variation>A</variation>
    <location>
        <position position="156"/>
    </location>
</feature>
<feature type="mutagenesis site" description="Loss of activity." evidence="3">
    <original>D</original>
    <variation>A</variation>
    <location>
        <position position="161"/>
    </location>
</feature>
<feature type="mutagenesis site" description="No change in activity; when associated with R-215." evidence="3">
    <original>H</original>
    <variation>R</variation>
    <location>
        <position position="211"/>
    </location>
</feature>
<feature type="mutagenesis site" description="No change in activity; when associated with R-211." evidence="3">
    <original>H</original>
    <variation>R</variation>
    <location>
        <position position="215"/>
    </location>
</feature>
<feature type="mutagenesis site" description="Loss of activity." evidence="3">
    <original>R</original>
    <variation>A</variation>
    <variation>D</variation>
    <location>
        <position position="320"/>
    </location>
</feature>
<feature type="mutagenesis site" description="Almost no change in activity." evidence="3">
    <original>R</original>
    <variation>H</variation>
    <location>
        <position position="320"/>
    </location>
</feature>
<feature type="mutagenesis site" description="No change in activity." evidence="3">
    <original>H</original>
    <variation>R</variation>
    <location>
        <position position="333"/>
    </location>
</feature>
<feature type="mutagenesis site" description="Strong decrease in activity." evidence="3">
    <original>R</original>
    <variation>A</variation>
    <location>
        <position position="347"/>
    </location>
</feature>
<feature type="helix" evidence="5">
    <location>
        <begin position="2"/>
        <end position="26"/>
    </location>
</feature>
<feature type="helix" evidence="5">
    <location>
        <begin position="32"/>
        <end position="42"/>
    </location>
</feature>
<feature type="turn" evidence="5">
    <location>
        <begin position="43"/>
        <end position="46"/>
    </location>
</feature>
<feature type="helix" evidence="5">
    <location>
        <begin position="51"/>
        <end position="76"/>
    </location>
</feature>
<feature type="helix" evidence="5">
    <location>
        <begin position="82"/>
        <end position="84"/>
    </location>
</feature>
<feature type="helix" evidence="5">
    <location>
        <begin position="86"/>
        <end position="93"/>
    </location>
</feature>
<feature type="helix" evidence="5">
    <location>
        <begin position="95"/>
        <end position="111"/>
    </location>
</feature>
<feature type="helix" evidence="5">
    <location>
        <begin position="119"/>
        <end position="128"/>
    </location>
</feature>
<feature type="turn" evidence="5">
    <location>
        <begin position="133"/>
        <end position="136"/>
    </location>
</feature>
<feature type="helix" evidence="5">
    <location>
        <begin position="137"/>
        <end position="140"/>
    </location>
</feature>
<feature type="turn" evidence="5">
    <location>
        <begin position="141"/>
        <end position="144"/>
    </location>
</feature>
<feature type="helix" evidence="5">
    <location>
        <begin position="147"/>
        <end position="174"/>
    </location>
</feature>
<feature type="strand" evidence="5">
    <location>
        <begin position="177"/>
        <end position="179"/>
    </location>
</feature>
<feature type="helix" evidence="5">
    <location>
        <begin position="183"/>
        <end position="211"/>
    </location>
</feature>
<feature type="helix" evidence="5">
    <location>
        <begin position="215"/>
        <end position="217"/>
    </location>
</feature>
<feature type="helix" evidence="5">
    <location>
        <begin position="218"/>
        <end position="233"/>
    </location>
</feature>
<feature type="helix" evidence="5">
    <location>
        <begin position="236"/>
        <end position="240"/>
    </location>
</feature>
<feature type="helix" evidence="5">
    <location>
        <begin position="248"/>
        <end position="264"/>
    </location>
</feature>
<feature type="helix" evidence="5">
    <location>
        <begin position="269"/>
        <end position="295"/>
    </location>
</feature>
<feature type="helix" evidence="5">
    <location>
        <begin position="298"/>
        <end position="317"/>
    </location>
</feature>
<feature type="helix" evidence="5">
    <location>
        <begin position="319"/>
        <end position="327"/>
    </location>
</feature>
<feature type="helix" evidence="5">
    <location>
        <begin position="335"/>
        <end position="343"/>
    </location>
</feature>
<feature type="helix" evidence="5">
    <location>
        <begin position="349"/>
        <end position="364"/>
    </location>
</feature>
<feature type="strand" evidence="5">
    <location>
        <begin position="368"/>
        <end position="371"/>
    </location>
</feature>
<feature type="turn" evidence="5">
    <location>
        <begin position="372"/>
        <end position="376"/>
    </location>
</feature>
<feature type="helix" evidence="5">
    <location>
        <begin position="379"/>
        <end position="410"/>
    </location>
</feature>